<organism>
    <name type="scientific">Corynebacterium jeikeium (strain K411)</name>
    <dbReference type="NCBI Taxonomy" id="306537"/>
    <lineage>
        <taxon>Bacteria</taxon>
        <taxon>Bacillati</taxon>
        <taxon>Actinomycetota</taxon>
        <taxon>Actinomycetes</taxon>
        <taxon>Mycobacteriales</taxon>
        <taxon>Corynebacteriaceae</taxon>
        <taxon>Corynebacterium</taxon>
    </lineage>
</organism>
<sequence length="272" mass="29106">MANYTAADVKKLREITGAGMMDCKKALEEAAGDFDKAIEILRIKGAKDVGKRAERSASEGLIAVSGNTMIEVNAETDFVAKNSEFIEFADKVAAAAAEAKANSREELEAVEVDGQKAVDALQQLSAKIGEKLELKRATTIEGDKVAVYMHHRSADLPPAVGVLVAYEGDDEGAAKAAAMQVAALKAKYLSSDEVPAETVAKEREIAEATAREEGKPEKALPNIIEGRLKGYFKDVCLLDQPSVTESKKSVKQVMDEAGVTLKGFKRFEVGQA</sequence>
<accession>Q4JV19</accession>
<dbReference type="EMBL" id="CR931997">
    <property type="protein sequence ID" value="CAI37338.1"/>
    <property type="molecule type" value="Genomic_DNA"/>
</dbReference>
<dbReference type="RefSeq" id="WP_005295278.1">
    <property type="nucleotide sequence ID" value="NC_007164.1"/>
</dbReference>
<dbReference type="SMR" id="Q4JV19"/>
<dbReference type="STRING" id="306537.jk1174"/>
<dbReference type="GeneID" id="92738693"/>
<dbReference type="KEGG" id="cjk:jk1174"/>
<dbReference type="eggNOG" id="COG0264">
    <property type="taxonomic scope" value="Bacteria"/>
</dbReference>
<dbReference type="HOGENOM" id="CLU_047155_0_0_11"/>
<dbReference type="OrthoDB" id="9808348at2"/>
<dbReference type="Proteomes" id="UP000000545">
    <property type="component" value="Chromosome"/>
</dbReference>
<dbReference type="GO" id="GO:0005737">
    <property type="term" value="C:cytoplasm"/>
    <property type="evidence" value="ECO:0007669"/>
    <property type="project" value="UniProtKB-SubCell"/>
</dbReference>
<dbReference type="GO" id="GO:0003746">
    <property type="term" value="F:translation elongation factor activity"/>
    <property type="evidence" value="ECO:0007669"/>
    <property type="project" value="UniProtKB-UniRule"/>
</dbReference>
<dbReference type="CDD" id="cd14275">
    <property type="entry name" value="UBA_EF-Ts"/>
    <property type="match status" value="1"/>
</dbReference>
<dbReference type="FunFam" id="1.10.286.20:FF:000001">
    <property type="entry name" value="Elongation factor Ts"/>
    <property type="match status" value="1"/>
</dbReference>
<dbReference type="FunFam" id="1.10.8.10:FF:000001">
    <property type="entry name" value="Elongation factor Ts"/>
    <property type="match status" value="1"/>
</dbReference>
<dbReference type="Gene3D" id="1.10.286.20">
    <property type="match status" value="1"/>
</dbReference>
<dbReference type="Gene3D" id="1.10.8.10">
    <property type="entry name" value="DNA helicase RuvA subunit, C-terminal domain"/>
    <property type="match status" value="1"/>
</dbReference>
<dbReference type="Gene3D" id="3.30.479.20">
    <property type="entry name" value="Elongation factor Ts, dimerisation domain"/>
    <property type="match status" value="2"/>
</dbReference>
<dbReference type="HAMAP" id="MF_00050">
    <property type="entry name" value="EF_Ts"/>
    <property type="match status" value="1"/>
</dbReference>
<dbReference type="InterPro" id="IPR036402">
    <property type="entry name" value="EF-Ts_dimer_sf"/>
</dbReference>
<dbReference type="InterPro" id="IPR001816">
    <property type="entry name" value="Transl_elong_EFTs/EF1B"/>
</dbReference>
<dbReference type="InterPro" id="IPR014039">
    <property type="entry name" value="Transl_elong_EFTs/EF1B_dimer"/>
</dbReference>
<dbReference type="InterPro" id="IPR018101">
    <property type="entry name" value="Transl_elong_Ts_CS"/>
</dbReference>
<dbReference type="InterPro" id="IPR009060">
    <property type="entry name" value="UBA-like_sf"/>
</dbReference>
<dbReference type="NCBIfam" id="TIGR00116">
    <property type="entry name" value="tsf"/>
    <property type="match status" value="1"/>
</dbReference>
<dbReference type="PANTHER" id="PTHR11741">
    <property type="entry name" value="ELONGATION FACTOR TS"/>
    <property type="match status" value="1"/>
</dbReference>
<dbReference type="PANTHER" id="PTHR11741:SF0">
    <property type="entry name" value="ELONGATION FACTOR TS, MITOCHONDRIAL"/>
    <property type="match status" value="1"/>
</dbReference>
<dbReference type="Pfam" id="PF00889">
    <property type="entry name" value="EF_TS"/>
    <property type="match status" value="1"/>
</dbReference>
<dbReference type="SUPFAM" id="SSF54713">
    <property type="entry name" value="Elongation factor Ts (EF-Ts), dimerisation domain"/>
    <property type="match status" value="1"/>
</dbReference>
<dbReference type="SUPFAM" id="SSF46934">
    <property type="entry name" value="UBA-like"/>
    <property type="match status" value="1"/>
</dbReference>
<dbReference type="PROSITE" id="PS01126">
    <property type="entry name" value="EF_TS_1"/>
    <property type="match status" value="1"/>
</dbReference>
<dbReference type="PROSITE" id="PS01127">
    <property type="entry name" value="EF_TS_2"/>
    <property type="match status" value="1"/>
</dbReference>
<name>EFTS_CORJK</name>
<reference key="1">
    <citation type="journal article" date="2005" name="J. Bacteriol.">
        <title>Complete genome sequence and analysis of the multiresistant nosocomial pathogen Corynebacterium jeikeium K411, a lipid-requiring bacterium of the human skin flora.</title>
        <authorList>
            <person name="Tauch A."/>
            <person name="Kaiser O."/>
            <person name="Hain T."/>
            <person name="Goesmann A."/>
            <person name="Weisshaar B."/>
            <person name="Albersmeier A."/>
            <person name="Bekel T."/>
            <person name="Bischoff N."/>
            <person name="Brune I."/>
            <person name="Chakraborty T."/>
            <person name="Kalinowski J."/>
            <person name="Meyer F."/>
            <person name="Rupp O."/>
            <person name="Schneiker S."/>
            <person name="Viehoever P."/>
            <person name="Puehler A."/>
        </authorList>
    </citation>
    <scope>NUCLEOTIDE SEQUENCE [LARGE SCALE GENOMIC DNA]</scope>
    <source>
        <strain>K411</strain>
    </source>
</reference>
<comment type="function">
    <text evidence="1">Associates with the EF-Tu.GDP complex and induces the exchange of GDP to GTP. It remains bound to the aminoacyl-tRNA.EF-Tu.GTP complex up to the GTP hydrolysis stage on the ribosome.</text>
</comment>
<comment type="subcellular location">
    <subcellularLocation>
        <location evidence="1">Cytoplasm</location>
    </subcellularLocation>
</comment>
<comment type="similarity">
    <text evidence="1">Belongs to the EF-Ts family.</text>
</comment>
<feature type="chain" id="PRO_0000241476" description="Elongation factor Ts">
    <location>
        <begin position="1"/>
        <end position="272"/>
    </location>
</feature>
<feature type="region of interest" description="Involved in Mg(2+) ion dislocation from EF-Tu" evidence="1">
    <location>
        <begin position="76"/>
        <end position="79"/>
    </location>
</feature>
<proteinExistence type="inferred from homology"/>
<evidence type="ECO:0000255" key="1">
    <source>
        <dbReference type="HAMAP-Rule" id="MF_00050"/>
    </source>
</evidence>
<gene>
    <name evidence="1" type="primary">tsf</name>
    <name type="ordered locus">jk1174</name>
</gene>
<protein>
    <recommendedName>
        <fullName evidence="1">Elongation factor Ts</fullName>
        <shortName evidence="1">EF-Ts</shortName>
    </recommendedName>
</protein>
<keyword id="KW-0963">Cytoplasm</keyword>
<keyword id="KW-0251">Elongation factor</keyword>
<keyword id="KW-0648">Protein biosynthesis</keyword>
<keyword id="KW-1185">Reference proteome</keyword>